<evidence type="ECO:0000250" key="1">
    <source>
        <dbReference type="UniProtKB" id="H0USY4"/>
    </source>
</evidence>
<evidence type="ECO:0000250" key="2">
    <source>
        <dbReference type="UniProtKB" id="P0DQW2"/>
    </source>
</evidence>
<evidence type="ECO:0000269" key="3">
    <source>
    </source>
</evidence>
<evidence type="ECO:0000303" key="4">
    <source>
    </source>
</evidence>
<evidence type="ECO:0000305" key="5"/>
<evidence type="ECO:0000305" key="6">
    <source>
    </source>
</evidence>
<keyword id="KW-0027">Amidation</keyword>
<keyword id="KW-0878">Amphibian defense peptide</keyword>
<keyword id="KW-0044">Antibiotic</keyword>
<keyword id="KW-0929">Antimicrobial</keyword>
<keyword id="KW-0903">Direct protein sequencing</keyword>
<keyword id="KW-0391">Immunity</keyword>
<keyword id="KW-0399">Innate immunity</keyword>
<keyword id="KW-0472">Membrane</keyword>
<keyword id="KW-0964">Secreted</keyword>
<keyword id="KW-1052">Target cell membrane</keyword>
<keyword id="KW-1053">Target membrane</keyword>
<dbReference type="GO" id="GO:0005576">
    <property type="term" value="C:extracellular region"/>
    <property type="evidence" value="ECO:0007669"/>
    <property type="project" value="UniProtKB-SubCell"/>
</dbReference>
<dbReference type="GO" id="GO:0016020">
    <property type="term" value="C:membrane"/>
    <property type="evidence" value="ECO:0007669"/>
    <property type="project" value="UniProtKB-KW"/>
</dbReference>
<dbReference type="GO" id="GO:0044218">
    <property type="term" value="C:other organism cell membrane"/>
    <property type="evidence" value="ECO:0007669"/>
    <property type="project" value="UniProtKB-KW"/>
</dbReference>
<dbReference type="GO" id="GO:0042742">
    <property type="term" value="P:defense response to bacterium"/>
    <property type="evidence" value="ECO:0007669"/>
    <property type="project" value="UniProtKB-KW"/>
</dbReference>
<dbReference type="GO" id="GO:0045087">
    <property type="term" value="P:innate immune response"/>
    <property type="evidence" value="ECO:0007669"/>
    <property type="project" value="UniProtKB-KW"/>
</dbReference>
<proteinExistence type="evidence at protein level"/>
<organism>
    <name type="scientific">Alytes obstetricans</name>
    <name type="common">Common midwife toad</name>
    <name type="synonym">Bufo obstetricans</name>
    <dbReference type="NCBI Taxonomy" id="8443"/>
    <lineage>
        <taxon>Eukaryota</taxon>
        <taxon>Metazoa</taxon>
        <taxon>Chordata</taxon>
        <taxon>Craniata</taxon>
        <taxon>Vertebrata</taxon>
        <taxon>Euteleostomi</taxon>
        <taxon>Amphibia</taxon>
        <taxon>Batrachia</taxon>
        <taxon>Anura</taxon>
        <taxon>Alytidae</taxon>
        <taxon>Alytinae</taxon>
        <taxon>Alytes</taxon>
    </lineage>
</organism>
<sequence>GLKDIFKAGLGSLVKNIAAHVAN</sequence>
<accession>P0DQW4</accession>
<feature type="peptide" id="PRO_0000457133" description="Alyteserin-1d" evidence="3">
    <location>
        <begin position="1"/>
        <end position="23"/>
    </location>
</feature>
<feature type="modified residue" description="Asparagine amide" evidence="3">
    <location>
        <position position="23"/>
    </location>
</feature>
<reference key="1">
    <citation type="journal article" date="2009" name="Peptides">
        <title>The alyteserins: two families of antimicrobial peptides from the skin secretions of the midwife toad Alytes obstetricans (Alytidae).</title>
        <authorList>
            <person name="Conlon J.M."/>
            <person name="Demandt A."/>
            <person name="Nielsen P.F."/>
            <person name="Leprince J."/>
            <person name="Vaudry H."/>
            <person name="Woodhams D.C."/>
        </authorList>
    </citation>
    <scope>PROTEIN SEQUENCE</scope>
    <scope>SUBCELLULAR LOCATION</scope>
    <scope>AMIDATION AT ASN-23</scope>
    <scope>MASS SPECTROMETRY</scope>
    <source>
        <tissue>Skin secretion</tissue>
    </source>
</reference>
<protein>
    <recommendedName>
        <fullName evidence="4">Alyteserin-1d</fullName>
    </recommendedName>
</protein>
<comment type="function">
    <text evidence="2">Antibacterial peptide with amphipathic alpha-helical structure. Shows selective growth inhibitory activity against the Gram-negative bacteria E.coli (MIC=25 uM) Has a weak hemolytic activity against human erythrocytes (LC(50)&gt;100 uM). Is very weakly active against S.aureus (MIC=200 uM).</text>
</comment>
<comment type="subcellular location">
    <subcellularLocation>
        <location evidence="1">Secreted</location>
    </subcellularLocation>
    <subcellularLocation>
        <location evidence="1">Target cell membrane</location>
    </subcellularLocation>
    <text evidence="1">About the first 18 N-terminal residues of the peptide inserts into the lipid bilayer.</text>
</comment>
<comment type="tissue specificity">
    <text evidence="6">Expressed by the skin glands.</text>
</comment>
<comment type="mass spectrometry"/>
<comment type="similarity">
    <text evidence="5">Belongs to the frog skin active peptide (FSAP) family. Alyteserin-1 subfamily.</text>
</comment>
<name>ATI1D_ALYOB</name>